<sequence>MASLKCSTVVCVICLEKPKYRCPACRVPYCSVVCFRKHKEQCNPETRPVEKKIRSALPTKTVKPVENKDDDDSIADFLNSDEEEDRVSLQNLKNLGESATLRSLLLNPHLRQLMVNLDQGEDKAKLMRAYMQEPLFVEFADCCLGIVEPSQNEES</sequence>
<proteinExistence type="evidence at protein level"/>
<gene>
    <name type="primary">ZNHIT3</name>
    <name type="synonym">TRIP3</name>
</gene>
<evidence type="ECO:0000255" key="1">
    <source>
        <dbReference type="PROSITE-ProRule" id="PRU00453"/>
    </source>
</evidence>
<evidence type="ECO:0000269" key="2">
    <source>
    </source>
</evidence>
<evidence type="ECO:0000269" key="3">
    <source>
    </source>
</evidence>
<evidence type="ECO:0000305" key="4"/>
<evidence type="ECO:0007744" key="5">
    <source>
    </source>
</evidence>
<evidence type="ECO:0007744" key="6">
    <source>
    </source>
</evidence>
<evidence type="ECO:0007744" key="7">
    <source>
    </source>
</evidence>
<evidence type="ECO:0007744" key="8">
    <source>
    </source>
</evidence>
<evidence type="ECO:0007829" key="9">
    <source>
        <dbReference type="PDB" id="2YQQ"/>
    </source>
</evidence>
<evidence type="ECO:0007829" key="10">
    <source>
        <dbReference type="PDB" id="5L85"/>
    </source>
</evidence>
<dbReference type="EMBL" id="AF400652">
    <property type="protein sequence ID" value="AAM82423.1"/>
    <property type="molecule type" value="mRNA"/>
</dbReference>
<dbReference type="EMBL" id="AK290858">
    <property type="protein sequence ID" value="BAF83547.1"/>
    <property type="molecule type" value="mRNA"/>
</dbReference>
<dbReference type="EMBL" id="AC126327">
    <property type="status" value="NOT_ANNOTATED_CDS"/>
    <property type="molecule type" value="Genomic_DNA"/>
</dbReference>
<dbReference type="EMBL" id="CH471199">
    <property type="protein sequence ID" value="EAW57552.1"/>
    <property type="molecule type" value="Genomic_DNA"/>
</dbReference>
<dbReference type="EMBL" id="BC017931">
    <property type="protein sequence ID" value="AAH17931.1"/>
    <property type="molecule type" value="mRNA"/>
</dbReference>
<dbReference type="EMBL" id="L40410">
    <property type="protein sequence ID" value="AAC41737.1"/>
    <property type="molecule type" value="mRNA"/>
</dbReference>
<dbReference type="CCDS" id="CCDS11312.1">
    <molecule id="Q15649-1"/>
</dbReference>
<dbReference type="CCDS" id="CCDS62156.1">
    <molecule id="Q15649-2"/>
</dbReference>
<dbReference type="RefSeq" id="NP_001268361.1">
    <molecule id="Q15649-2"/>
    <property type="nucleotide sequence ID" value="NM_001281432.2"/>
</dbReference>
<dbReference type="RefSeq" id="NP_001268362.1">
    <property type="nucleotide sequence ID" value="NM_001281433.1"/>
</dbReference>
<dbReference type="RefSeq" id="NP_001268363.1">
    <property type="nucleotide sequence ID" value="NM_001281434.1"/>
</dbReference>
<dbReference type="RefSeq" id="NP_004764.1">
    <molecule id="Q15649-1"/>
    <property type="nucleotide sequence ID" value="NM_004773.4"/>
</dbReference>
<dbReference type="PDB" id="2YQQ">
    <property type="method" value="NMR"/>
    <property type="chains" value="A=4-46"/>
</dbReference>
<dbReference type="PDB" id="5L85">
    <property type="method" value="NMR"/>
    <property type="chains" value="A=85-155"/>
</dbReference>
<dbReference type="PDBsum" id="2YQQ"/>
<dbReference type="PDBsum" id="5L85"/>
<dbReference type="SMR" id="Q15649"/>
<dbReference type="BioGRID" id="114736">
    <property type="interactions" value="54"/>
</dbReference>
<dbReference type="FunCoup" id="Q15649">
    <property type="interactions" value="1961"/>
</dbReference>
<dbReference type="IntAct" id="Q15649">
    <property type="interactions" value="31"/>
</dbReference>
<dbReference type="STRING" id="9606.ENSP00000484687"/>
<dbReference type="iPTMnet" id="Q15649"/>
<dbReference type="PhosphoSitePlus" id="Q15649"/>
<dbReference type="BioMuta" id="ZNHIT3"/>
<dbReference type="DMDM" id="46397898"/>
<dbReference type="jPOST" id="Q15649"/>
<dbReference type="MassIVE" id="Q15649"/>
<dbReference type="PaxDb" id="9606-ENSP00000484687"/>
<dbReference type="PeptideAtlas" id="Q15649"/>
<dbReference type="ProteomicsDB" id="60687">
    <molecule id="Q15649-1"/>
</dbReference>
<dbReference type="Pumba" id="Q15649"/>
<dbReference type="Antibodypedia" id="74086">
    <property type="antibodies" value="58 antibodies from 20 providers"/>
</dbReference>
<dbReference type="DNASU" id="9326"/>
<dbReference type="Ensembl" id="ENST00000617429.5">
    <molecule id="Q15649-1"/>
    <property type="protein sequence ID" value="ENSP00000484687.1"/>
    <property type="gene ID" value="ENSG00000273611.5"/>
</dbReference>
<dbReference type="Ensembl" id="ENST00000619649.4">
    <molecule id="Q15649-2"/>
    <property type="protein sequence ID" value="ENSP00000478183.1"/>
    <property type="gene ID" value="ENSG00000278574.4"/>
</dbReference>
<dbReference type="Ensembl" id="ENST00000620324.4">
    <molecule id="Q15649-2"/>
    <property type="protein sequence ID" value="ENSP00000479727.1"/>
    <property type="gene ID" value="ENSG00000273611.5"/>
</dbReference>
<dbReference type="Ensembl" id="ENST00000620508.4">
    <molecule id="Q15649-1"/>
    <property type="protein sequence ID" value="ENSP00000481504.1"/>
    <property type="gene ID" value="ENSG00000278574.4"/>
</dbReference>
<dbReference type="GeneID" id="9326"/>
<dbReference type="KEGG" id="hsa:9326"/>
<dbReference type="MANE-Select" id="ENST00000617429.5">
    <property type="protein sequence ID" value="ENSP00000484687.1"/>
    <property type="RefSeq nucleotide sequence ID" value="NM_004773.4"/>
    <property type="RefSeq protein sequence ID" value="NP_004764.1"/>
</dbReference>
<dbReference type="UCSC" id="uc002hms.3">
    <molecule id="Q15649-1"/>
    <property type="organism name" value="human"/>
</dbReference>
<dbReference type="AGR" id="HGNC:12309"/>
<dbReference type="CTD" id="9326"/>
<dbReference type="DisGeNET" id="9326"/>
<dbReference type="GeneCards" id="ZNHIT3"/>
<dbReference type="HGNC" id="HGNC:12309">
    <property type="gene designation" value="ZNHIT3"/>
</dbReference>
<dbReference type="HPA" id="ENSG00000273611">
    <property type="expression patterns" value="Low tissue specificity"/>
</dbReference>
<dbReference type="MalaCards" id="ZNHIT3"/>
<dbReference type="MIM" id="260565">
    <property type="type" value="phenotype"/>
</dbReference>
<dbReference type="MIM" id="604500">
    <property type="type" value="gene"/>
</dbReference>
<dbReference type="neXtProt" id="NX_Q15649"/>
<dbReference type="OpenTargets" id="ENSG00000273611"/>
<dbReference type="Orphanet" id="2836">
    <property type="disease" value="PEHO syndrome"/>
</dbReference>
<dbReference type="PharmGKB" id="PA36987"/>
<dbReference type="VEuPathDB" id="HostDB:ENSG00000273611"/>
<dbReference type="eggNOG" id="KOG2857">
    <property type="taxonomic scope" value="Eukaryota"/>
</dbReference>
<dbReference type="GeneTree" id="ENSGT00390000010822"/>
<dbReference type="HOGENOM" id="CLU_117355_1_0_1"/>
<dbReference type="InParanoid" id="Q15649"/>
<dbReference type="OMA" id="CNEAQSK"/>
<dbReference type="OrthoDB" id="18412at2759"/>
<dbReference type="PAN-GO" id="Q15649">
    <property type="GO annotations" value="5 GO annotations based on evolutionary models"/>
</dbReference>
<dbReference type="PhylomeDB" id="Q15649"/>
<dbReference type="TreeFam" id="TF324673"/>
<dbReference type="PathwayCommons" id="Q15649"/>
<dbReference type="SignaLink" id="Q15649"/>
<dbReference type="BioGRID-ORCS" id="9326">
    <property type="hits" value="453 hits in 1154 CRISPR screens"/>
</dbReference>
<dbReference type="ChiTaRS" id="ZNHIT3">
    <property type="organism name" value="human"/>
</dbReference>
<dbReference type="EvolutionaryTrace" id="Q15649"/>
<dbReference type="GenomeRNAi" id="9326"/>
<dbReference type="Pharos" id="Q15649">
    <property type="development level" value="Tbio"/>
</dbReference>
<dbReference type="PRO" id="PR:Q15649"/>
<dbReference type="Proteomes" id="UP000005640">
    <property type="component" value="Chromosome 17"/>
</dbReference>
<dbReference type="RNAct" id="Q15649">
    <property type="molecule type" value="protein"/>
</dbReference>
<dbReference type="Bgee" id="ENSG00000273611">
    <property type="expression patterns" value="Expressed in cortical plate and 103 other cell types or tissues"/>
</dbReference>
<dbReference type="ExpressionAtlas" id="Q15649">
    <property type="expression patterns" value="baseline and differential"/>
</dbReference>
<dbReference type="GO" id="GO:0005737">
    <property type="term" value="C:cytoplasm"/>
    <property type="evidence" value="ECO:0000314"/>
    <property type="project" value="UniProtKB"/>
</dbReference>
<dbReference type="GO" id="GO:0005634">
    <property type="term" value="C:nucleus"/>
    <property type="evidence" value="ECO:0000314"/>
    <property type="project" value="UniProtKB"/>
</dbReference>
<dbReference type="GO" id="GO:0070761">
    <property type="term" value="C:pre-snoRNP complex"/>
    <property type="evidence" value="ECO:0000318"/>
    <property type="project" value="GO_Central"/>
</dbReference>
<dbReference type="GO" id="GO:0046966">
    <property type="term" value="F:nuclear thyroid hormone receptor binding"/>
    <property type="evidence" value="ECO:0000304"/>
    <property type="project" value="UniProtKB"/>
</dbReference>
<dbReference type="GO" id="GO:0008270">
    <property type="term" value="F:zinc ion binding"/>
    <property type="evidence" value="ECO:0007669"/>
    <property type="project" value="UniProtKB-KW"/>
</dbReference>
<dbReference type="GO" id="GO:0000492">
    <property type="term" value="P:box C/D snoRNP assembly"/>
    <property type="evidence" value="ECO:0000318"/>
    <property type="project" value="GO_Central"/>
</dbReference>
<dbReference type="GO" id="GO:0000463">
    <property type="term" value="P:maturation of LSU-rRNA from tricistronic rRNA transcript (SSU-rRNA, 5.8S rRNA, LSU-rRNA)"/>
    <property type="evidence" value="ECO:0000318"/>
    <property type="project" value="GO_Central"/>
</dbReference>
<dbReference type="GO" id="GO:0006355">
    <property type="term" value="P:regulation of DNA-templated transcription"/>
    <property type="evidence" value="ECO:0000304"/>
    <property type="project" value="UniProtKB"/>
</dbReference>
<dbReference type="GO" id="GO:0048254">
    <property type="term" value="P:snoRNA localization"/>
    <property type="evidence" value="ECO:0000318"/>
    <property type="project" value="GO_Central"/>
</dbReference>
<dbReference type="CDD" id="cd23024">
    <property type="entry name" value="zf-HIT_ZNHIT2-3"/>
    <property type="match status" value="1"/>
</dbReference>
<dbReference type="FunFam" id="3.30.60.190:FF:000002">
    <property type="entry name" value="Zinc finger HIT domain-containing protein 3"/>
    <property type="match status" value="1"/>
</dbReference>
<dbReference type="Gene3D" id="3.30.60.190">
    <property type="match status" value="1"/>
</dbReference>
<dbReference type="InterPro" id="IPR051639">
    <property type="entry name" value="BCD1"/>
</dbReference>
<dbReference type="InterPro" id="IPR007529">
    <property type="entry name" value="Znf_HIT"/>
</dbReference>
<dbReference type="InterPro" id="IPR048371">
    <property type="entry name" value="ZNHIT3_C"/>
</dbReference>
<dbReference type="PANTHER" id="PTHR13483">
    <property type="entry name" value="BOX C_D SNORNA PROTEIN 1-RELATED"/>
    <property type="match status" value="1"/>
</dbReference>
<dbReference type="PANTHER" id="PTHR13483:SF11">
    <property type="entry name" value="ZINC FINGER HIT DOMAIN-CONTAINING PROTEIN 3"/>
    <property type="match status" value="1"/>
</dbReference>
<dbReference type="Pfam" id="PF04438">
    <property type="entry name" value="zf-HIT"/>
    <property type="match status" value="1"/>
</dbReference>
<dbReference type="Pfam" id="PF21373">
    <property type="entry name" value="ZNHIT3_C"/>
    <property type="match status" value="1"/>
</dbReference>
<dbReference type="SUPFAM" id="SSF144232">
    <property type="entry name" value="HIT/MYND zinc finger-like"/>
    <property type="match status" value="1"/>
</dbReference>
<dbReference type="PROSITE" id="PS51083">
    <property type="entry name" value="ZF_HIT"/>
    <property type="match status" value="1"/>
</dbReference>
<organism>
    <name type="scientific">Homo sapiens</name>
    <name type="common">Human</name>
    <dbReference type="NCBI Taxonomy" id="9606"/>
    <lineage>
        <taxon>Eukaryota</taxon>
        <taxon>Metazoa</taxon>
        <taxon>Chordata</taxon>
        <taxon>Craniata</taxon>
        <taxon>Vertebrata</taxon>
        <taxon>Euteleostomi</taxon>
        <taxon>Mammalia</taxon>
        <taxon>Eutheria</taxon>
        <taxon>Euarchontoglires</taxon>
        <taxon>Primates</taxon>
        <taxon>Haplorrhini</taxon>
        <taxon>Catarrhini</taxon>
        <taxon>Hominidae</taxon>
        <taxon>Homo</taxon>
    </lineage>
</organism>
<name>ZNHI3_HUMAN</name>
<accession>Q15649</accession>
<accession>A8K493</accession>
<accession>K7EQP1</accession>
<accession>Q8WVJ3</accession>
<comment type="subunit">
    <text evidence="2 3">Thyroid receptor interacting proteins (TRIPs) specifically interact with the ligand binding domain of the thyroid receptor (TR) (PubMed:7776974). Requires the presence of thyroid hormone for its interaction (PubMed:7776974). Interacts with NUFIP1 (PubMed:28335020). Interacts (via HIT-type zinc finger) with the RUVBL1/RUVBL2 complex in the presence of ADP (PubMed:28561026).</text>
</comment>
<comment type="interaction">
    <interactant intactId="EBI-2563564">
        <id>Q15649</id>
    </interactant>
    <interactant intactId="EBI-2563549">
        <id>Q9UHK0</id>
        <label>NUFIP1</label>
    </interactant>
    <organismsDiffer>false</organismsDiffer>
    <experiments>10</experiments>
</comment>
<comment type="subcellular location">
    <subcellularLocation>
        <location evidence="2">Cytoplasm</location>
    </subcellularLocation>
    <subcellularLocation>
        <location evidence="2">Nucleus</location>
    </subcellularLocation>
</comment>
<comment type="alternative products">
    <event type="alternative splicing"/>
    <isoform>
        <id>Q15649-1</id>
        <name>1</name>
        <sequence type="displayed"/>
    </isoform>
    <isoform>
        <id>Q15649-2</id>
        <name>2</name>
        <sequence type="described" ref="VSP_055155"/>
    </isoform>
</comment>
<comment type="disease" evidence="2">
    <disease id="DI-04784">
        <name>PEHO syndrome</name>
        <acronym>PEHO</acronym>
        <description>An autosomal recessive syndrome characterized by progressive encephalopathy, lack of psychomotor development, severe intellectual disability, early onset epileptic seizures, optic nerve/cerebellar atrophy, pedal edema, and early death.</description>
        <dbReference type="MIM" id="260565"/>
    </disease>
    <text>The disease is caused by variants affecting the gene represented in this entry.</text>
</comment>
<keyword id="KW-0002">3D-structure</keyword>
<keyword id="KW-0025">Alternative splicing</keyword>
<keyword id="KW-0963">Cytoplasm</keyword>
<keyword id="KW-0225">Disease variant</keyword>
<keyword id="KW-0887">Epilepsy</keyword>
<keyword id="KW-0991">Intellectual disability</keyword>
<keyword id="KW-0479">Metal-binding</keyword>
<keyword id="KW-0523">Neurodegeneration</keyword>
<keyword id="KW-0539">Nucleus</keyword>
<keyword id="KW-0597">Phosphoprotein</keyword>
<keyword id="KW-1267">Proteomics identification</keyword>
<keyword id="KW-1185">Reference proteome</keyword>
<keyword id="KW-0862">Zinc</keyword>
<keyword id="KW-0863">Zinc-finger</keyword>
<protein>
    <recommendedName>
        <fullName>Zinc finger HIT domain-containing protein 3</fullName>
    </recommendedName>
    <alternativeName>
        <fullName>HNF-4a coactivator</fullName>
    </alternativeName>
    <alternativeName>
        <fullName>Thyroid hormone receptor interactor 3</fullName>
    </alternativeName>
    <alternativeName>
        <fullName>Thyroid receptor-interacting protein 3</fullName>
        <shortName>TR-interacting protein 3</shortName>
        <shortName>TRIP-3</shortName>
    </alternativeName>
</protein>
<feature type="chain" id="PRO_0000173550" description="Zinc finger HIT domain-containing protein 3">
    <location>
        <begin position="1"/>
        <end position="155"/>
    </location>
</feature>
<feature type="zinc finger region" description="HIT-type" evidence="1">
    <location>
        <begin position="11"/>
        <end position="42"/>
    </location>
</feature>
<feature type="binding site" evidence="1">
    <location>
        <position position="11"/>
    </location>
    <ligand>
        <name>Zn(2+)</name>
        <dbReference type="ChEBI" id="CHEBI:29105"/>
        <label>1</label>
    </ligand>
</feature>
<feature type="binding site" evidence="1">
    <location>
        <position position="14"/>
    </location>
    <ligand>
        <name>Zn(2+)</name>
        <dbReference type="ChEBI" id="CHEBI:29105"/>
        <label>1</label>
    </ligand>
</feature>
<feature type="binding site" evidence="1">
    <location>
        <position position="22"/>
    </location>
    <ligand>
        <name>Zn(2+)</name>
        <dbReference type="ChEBI" id="CHEBI:29105"/>
        <label>2</label>
    </ligand>
</feature>
<feature type="binding site" evidence="1">
    <location>
        <position position="25"/>
    </location>
    <ligand>
        <name>Zn(2+)</name>
        <dbReference type="ChEBI" id="CHEBI:29105"/>
        <label>2</label>
    </ligand>
</feature>
<feature type="binding site" evidence="1">
    <location>
        <position position="30"/>
    </location>
    <ligand>
        <name>Zn(2+)</name>
        <dbReference type="ChEBI" id="CHEBI:29105"/>
        <label>1</label>
    </ligand>
</feature>
<feature type="binding site" evidence="1">
    <location>
        <position position="34"/>
    </location>
    <ligand>
        <name>Zn(2+)</name>
        <dbReference type="ChEBI" id="CHEBI:29105"/>
        <label>1</label>
    </ligand>
</feature>
<feature type="binding site" evidence="1">
    <location>
        <position position="38"/>
    </location>
    <ligand>
        <name>Zn(2+)</name>
        <dbReference type="ChEBI" id="CHEBI:29105"/>
        <label>2</label>
    </ligand>
</feature>
<feature type="binding site" evidence="1">
    <location>
        <position position="42"/>
    </location>
    <ligand>
        <name>Zn(2+)</name>
        <dbReference type="ChEBI" id="CHEBI:29105"/>
        <label>2</label>
    </ligand>
</feature>
<feature type="modified residue" description="Phosphoserine" evidence="5 6 7 8">
    <location>
        <position position="80"/>
    </location>
</feature>
<feature type="splice variant" id="VSP_055155" description="In isoform 2." evidence="4">
    <original>GESATLRSLLLNPHLRQLMVNLDQGEDKAKLMRAYMQEPLFVEFADCCLGIVEPSQNEES</original>
    <variation>DGLSSCHPGWSAAAQSRLTATSPSQIQAILMPQPPEQLGLQAPATTPNQFLYF</variation>
    <location>
        <begin position="96"/>
        <end position="155"/>
    </location>
</feature>
<feature type="sequence variant" id="VAR_079193" description="In PEHO; increased protein degradation; decreased protein abundance; does not affect localization to cytoplasm and nucleus; dbSNP:rs148890852." evidence="2">
    <original>S</original>
    <variation>L</variation>
    <location>
        <position position="31"/>
    </location>
</feature>
<feature type="turn" evidence="9">
    <location>
        <begin position="12"/>
        <end position="14"/>
    </location>
</feature>
<feature type="strand" evidence="9">
    <location>
        <begin position="19"/>
        <end position="21"/>
    </location>
</feature>
<feature type="turn" evidence="9">
    <location>
        <begin position="23"/>
        <end position="25"/>
    </location>
</feature>
<feature type="strand" evidence="9">
    <location>
        <begin position="28"/>
        <end position="31"/>
    </location>
</feature>
<feature type="helix" evidence="9">
    <location>
        <begin position="32"/>
        <end position="41"/>
    </location>
</feature>
<feature type="helix" evidence="10">
    <location>
        <begin position="89"/>
        <end position="97"/>
    </location>
</feature>
<feature type="helix" evidence="10">
    <location>
        <begin position="99"/>
        <end position="102"/>
    </location>
</feature>
<feature type="turn" evidence="10">
    <location>
        <begin position="103"/>
        <end position="106"/>
    </location>
</feature>
<feature type="helix" evidence="10">
    <location>
        <begin position="108"/>
        <end position="119"/>
    </location>
</feature>
<feature type="helix" evidence="10">
    <location>
        <begin position="123"/>
        <end position="129"/>
    </location>
</feature>
<feature type="turn" evidence="10">
    <location>
        <begin position="130"/>
        <end position="132"/>
    </location>
</feature>
<feature type="helix" evidence="10">
    <location>
        <begin position="134"/>
        <end position="147"/>
    </location>
</feature>
<reference key="1">
    <citation type="journal article" date="2002" name="Diabetes">
        <title>Thyroid hormone receptor interacting protein 3 (trip3) is a novel coactivator of hepatocyte nuclear factor-4alpha.</title>
        <authorList>
            <person name="Iwahashi H."/>
            <person name="Yamagata K."/>
            <person name="Yoshiuchi I."/>
            <person name="Terasaki J."/>
            <person name="Yang Q."/>
            <person name="Fukui K."/>
            <person name="Ihara A."/>
            <person name="Zhu Q."/>
            <person name="Asakura T."/>
            <person name="Cao Y."/>
            <person name="Imagawa A."/>
            <person name="Namba M."/>
            <person name="Hanafusa T."/>
            <person name="Miyagawa J."/>
            <person name="Matsuzawa Y."/>
        </authorList>
    </citation>
    <scope>NUCLEOTIDE SEQUENCE [MRNA]</scope>
</reference>
<reference key="2">
    <citation type="journal article" date="2004" name="Nat. Genet.">
        <title>Complete sequencing and characterization of 21,243 full-length human cDNAs.</title>
        <authorList>
            <person name="Ota T."/>
            <person name="Suzuki Y."/>
            <person name="Nishikawa T."/>
            <person name="Otsuki T."/>
            <person name="Sugiyama T."/>
            <person name="Irie R."/>
            <person name="Wakamatsu A."/>
            <person name="Hayashi K."/>
            <person name="Sato H."/>
            <person name="Nagai K."/>
            <person name="Kimura K."/>
            <person name="Makita H."/>
            <person name="Sekine M."/>
            <person name="Obayashi M."/>
            <person name="Nishi T."/>
            <person name="Shibahara T."/>
            <person name="Tanaka T."/>
            <person name="Ishii S."/>
            <person name="Yamamoto J."/>
            <person name="Saito K."/>
            <person name="Kawai Y."/>
            <person name="Isono Y."/>
            <person name="Nakamura Y."/>
            <person name="Nagahari K."/>
            <person name="Murakami K."/>
            <person name="Yasuda T."/>
            <person name="Iwayanagi T."/>
            <person name="Wagatsuma M."/>
            <person name="Shiratori A."/>
            <person name="Sudo H."/>
            <person name="Hosoiri T."/>
            <person name="Kaku Y."/>
            <person name="Kodaira H."/>
            <person name="Kondo H."/>
            <person name="Sugawara M."/>
            <person name="Takahashi M."/>
            <person name="Kanda K."/>
            <person name="Yokoi T."/>
            <person name="Furuya T."/>
            <person name="Kikkawa E."/>
            <person name="Omura Y."/>
            <person name="Abe K."/>
            <person name="Kamihara K."/>
            <person name="Katsuta N."/>
            <person name="Sato K."/>
            <person name="Tanikawa M."/>
            <person name="Yamazaki M."/>
            <person name="Ninomiya K."/>
            <person name="Ishibashi T."/>
            <person name="Yamashita H."/>
            <person name="Murakawa K."/>
            <person name="Fujimori K."/>
            <person name="Tanai H."/>
            <person name="Kimata M."/>
            <person name="Watanabe M."/>
            <person name="Hiraoka S."/>
            <person name="Chiba Y."/>
            <person name="Ishida S."/>
            <person name="Ono Y."/>
            <person name="Takiguchi S."/>
            <person name="Watanabe S."/>
            <person name="Yosida M."/>
            <person name="Hotuta T."/>
            <person name="Kusano J."/>
            <person name="Kanehori K."/>
            <person name="Takahashi-Fujii A."/>
            <person name="Hara H."/>
            <person name="Tanase T.-O."/>
            <person name="Nomura Y."/>
            <person name="Togiya S."/>
            <person name="Komai F."/>
            <person name="Hara R."/>
            <person name="Takeuchi K."/>
            <person name="Arita M."/>
            <person name="Imose N."/>
            <person name="Musashino K."/>
            <person name="Yuuki H."/>
            <person name="Oshima A."/>
            <person name="Sasaki N."/>
            <person name="Aotsuka S."/>
            <person name="Yoshikawa Y."/>
            <person name="Matsunawa H."/>
            <person name="Ichihara T."/>
            <person name="Shiohata N."/>
            <person name="Sano S."/>
            <person name="Moriya S."/>
            <person name="Momiyama H."/>
            <person name="Satoh N."/>
            <person name="Takami S."/>
            <person name="Terashima Y."/>
            <person name="Suzuki O."/>
            <person name="Nakagawa S."/>
            <person name="Senoh A."/>
            <person name="Mizoguchi H."/>
            <person name="Goto Y."/>
            <person name="Shimizu F."/>
            <person name="Wakebe H."/>
            <person name="Hishigaki H."/>
            <person name="Watanabe T."/>
            <person name="Sugiyama A."/>
            <person name="Takemoto M."/>
            <person name="Kawakami B."/>
            <person name="Yamazaki M."/>
            <person name="Watanabe K."/>
            <person name="Kumagai A."/>
            <person name="Itakura S."/>
            <person name="Fukuzumi Y."/>
            <person name="Fujimori Y."/>
            <person name="Komiyama M."/>
            <person name="Tashiro H."/>
            <person name="Tanigami A."/>
            <person name="Fujiwara T."/>
            <person name="Ono T."/>
            <person name="Yamada K."/>
            <person name="Fujii Y."/>
            <person name="Ozaki K."/>
            <person name="Hirao M."/>
            <person name="Ohmori Y."/>
            <person name="Kawabata A."/>
            <person name="Hikiji T."/>
            <person name="Kobatake N."/>
            <person name="Inagaki H."/>
            <person name="Ikema Y."/>
            <person name="Okamoto S."/>
            <person name="Okitani R."/>
            <person name="Kawakami T."/>
            <person name="Noguchi S."/>
            <person name="Itoh T."/>
            <person name="Shigeta K."/>
            <person name="Senba T."/>
            <person name="Matsumura K."/>
            <person name="Nakajima Y."/>
            <person name="Mizuno T."/>
            <person name="Morinaga M."/>
            <person name="Sasaki M."/>
            <person name="Togashi T."/>
            <person name="Oyama M."/>
            <person name="Hata H."/>
            <person name="Watanabe M."/>
            <person name="Komatsu T."/>
            <person name="Mizushima-Sugano J."/>
            <person name="Satoh T."/>
            <person name="Shirai Y."/>
            <person name="Takahashi Y."/>
            <person name="Nakagawa K."/>
            <person name="Okumura K."/>
            <person name="Nagase T."/>
            <person name="Nomura N."/>
            <person name="Kikuchi H."/>
            <person name="Masuho Y."/>
            <person name="Yamashita R."/>
            <person name="Nakai K."/>
            <person name="Yada T."/>
            <person name="Nakamura Y."/>
            <person name="Ohara O."/>
            <person name="Isogai T."/>
            <person name="Sugano S."/>
        </authorList>
    </citation>
    <scope>NUCLEOTIDE SEQUENCE [LARGE SCALE MRNA]</scope>
    <source>
        <tissue>Mammary gland</tissue>
    </source>
</reference>
<reference key="3">
    <citation type="journal article" date="2006" name="Nature">
        <title>DNA sequence of human chromosome 17 and analysis of rearrangement in the human lineage.</title>
        <authorList>
            <person name="Zody M.C."/>
            <person name="Garber M."/>
            <person name="Adams D.J."/>
            <person name="Sharpe T."/>
            <person name="Harrow J."/>
            <person name="Lupski J.R."/>
            <person name="Nicholson C."/>
            <person name="Searle S.M."/>
            <person name="Wilming L."/>
            <person name="Young S.K."/>
            <person name="Abouelleil A."/>
            <person name="Allen N.R."/>
            <person name="Bi W."/>
            <person name="Bloom T."/>
            <person name="Borowsky M.L."/>
            <person name="Bugalter B.E."/>
            <person name="Butler J."/>
            <person name="Chang J.L."/>
            <person name="Chen C.-K."/>
            <person name="Cook A."/>
            <person name="Corum B."/>
            <person name="Cuomo C.A."/>
            <person name="de Jong P.J."/>
            <person name="DeCaprio D."/>
            <person name="Dewar K."/>
            <person name="FitzGerald M."/>
            <person name="Gilbert J."/>
            <person name="Gibson R."/>
            <person name="Gnerre S."/>
            <person name="Goldstein S."/>
            <person name="Grafham D.V."/>
            <person name="Grocock R."/>
            <person name="Hafez N."/>
            <person name="Hagopian D.S."/>
            <person name="Hart E."/>
            <person name="Norman C.H."/>
            <person name="Humphray S."/>
            <person name="Jaffe D.B."/>
            <person name="Jones M."/>
            <person name="Kamal M."/>
            <person name="Khodiyar V.K."/>
            <person name="LaButti K."/>
            <person name="Laird G."/>
            <person name="Lehoczky J."/>
            <person name="Liu X."/>
            <person name="Lokyitsang T."/>
            <person name="Loveland J."/>
            <person name="Lui A."/>
            <person name="Macdonald P."/>
            <person name="Major J.E."/>
            <person name="Matthews L."/>
            <person name="Mauceli E."/>
            <person name="McCarroll S.A."/>
            <person name="Mihalev A.H."/>
            <person name="Mudge J."/>
            <person name="Nguyen C."/>
            <person name="Nicol R."/>
            <person name="O'Leary S.B."/>
            <person name="Osoegawa K."/>
            <person name="Schwartz D.C."/>
            <person name="Shaw-Smith C."/>
            <person name="Stankiewicz P."/>
            <person name="Steward C."/>
            <person name="Swarbreck D."/>
            <person name="Venkataraman V."/>
            <person name="Whittaker C.A."/>
            <person name="Yang X."/>
            <person name="Zimmer A.R."/>
            <person name="Bradley A."/>
            <person name="Hubbard T."/>
            <person name="Birren B.W."/>
            <person name="Rogers J."/>
            <person name="Lander E.S."/>
            <person name="Nusbaum C."/>
        </authorList>
    </citation>
    <scope>NUCLEOTIDE SEQUENCE [LARGE SCALE GENOMIC DNA]</scope>
</reference>
<reference key="4">
    <citation type="submission" date="2005-07" db="EMBL/GenBank/DDBJ databases">
        <authorList>
            <person name="Mural R.J."/>
            <person name="Istrail S."/>
            <person name="Sutton G.G."/>
            <person name="Florea L."/>
            <person name="Halpern A.L."/>
            <person name="Mobarry C.M."/>
            <person name="Lippert R."/>
            <person name="Walenz B."/>
            <person name="Shatkay H."/>
            <person name="Dew I."/>
            <person name="Miller J.R."/>
            <person name="Flanigan M.J."/>
            <person name="Edwards N.J."/>
            <person name="Bolanos R."/>
            <person name="Fasulo D."/>
            <person name="Halldorsson B.V."/>
            <person name="Hannenhalli S."/>
            <person name="Turner R."/>
            <person name="Yooseph S."/>
            <person name="Lu F."/>
            <person name="Nusskern D.R."/>
            <person name="Shue B.C."/>
            <person name="Zheng X.H."/>
            <person name="Zhong F."/>
            <person name="Delcher A.L."/>
            <person name="Huson D.H."/>
            <person name="Kravitz S.A."/>
            <person name="Mouchard L."/>
            <person name="Reinert K."/>
            <person name="Remington K.A."/>
            <person name="Clark A.G."/>
            <person name="Waterman M.S."/>
            <person name="Eichler E.E."/>
            <person name="Adams M.D."/>
            <person name="Hunkapiller M.W."/>
            <person name="Myers E.W."/>
            <person name="Venter J.C."/>
        </authorList>
    </citation>
    <scope>NUCLEOTIDE SEQUENCE [LARGE SCALE GENOMIC DNA]</scope>
</reference>
<reference key="5">
    <citation type="journal article" date="2004" name="Genome Res.">
        <title>The status, quality, and expansion of the NIH full-length cDNA project: the Mammalian Gene Collection (MGC).</title>
        <authorList>
            <consortium name="The MGC Project Team"/>
        </authorList>
    </citation>
    <scope>NUCLEOTIDE SEQUENCE [LARGE SCALE MRNA]</scope>
    <source>
        <tissue>Prostate</tissue>
    </source>
</reference>
<reference key="6">
    <citation type="journal article" date="1995" name="Mol. Endocrinol.">
        <title>Two classes of proteins dependent on either the presence or absence of thyroid hormone for interaction with the thyroid hormone receptor.</title>
        <authorList>
            <person name="Lee J.W."/>
            <person name="Choi H.-S."/>
            <person name="Gyuris J."/>
            <person name="Brent R."/>
            <person name="Moore D.D."/>
        </authorList>
    </citation>
    <scope>NUCLEOTIDE SEQUENCE [MRNA] OF 4-155</scope>
    <scope>INTERACTION WITH THYROID RECEPTOR</scope>
</reference>
<reference key="7">
    <citation type="journal article" date="2006" name="Cell">
        <title>Global, in vivo, and site-specific phosphorylation dynamics in signaling networks.</title>
        <authorList>
            <person name="Olsen J.V."/>
            <person name="Blagoev B."/>
            <person name="Gnad F."/>
            <person name="Macek B."/>
            <person name="Kumar C."/>
            <person name="Mortensen P."/>
            <person name="Mann M."/>
        </authorList>
    </citation>
    <scope>PHOSPHORYLATION [LARGE SCALE ANALYSIS] AT SER-80</scope>
    <scope>IDENTIFICATION BY MASS SPECTROMETRY [LARGE SCALE ANALYSIS]</scope>
    <source>
        <tissue>Cervix carcinoma</tissue>
    </source>
</reference>
<reference key="8">
    <citation type="journal article" date="2008" name="Mol. Cell">
        <title>Kinase-selective enrichment enables quantitative phosphoproteomics of the kinome across the cell cycle.</title>
        <authorList>
            <person name="Daub H."/>
            <person name="Olsen J.V."/>
            <person name="Bairlein M."/>
            <person name="Gnad F."/>
            <person name="Oppermann F.S."/>
            <person name="Korner R."/>
            <person name="Greff Z."/>
            <person name="Keri G."/>
            <person name="Stemmann O."/>
            <person name="Mann M."/>
        </authorList>
    </citation>
    <scope>PHOSPHORYLATION [LARGE SCALE ANALYSIS] AT SER-80</scope>
    <scope>IDENTIFICATION BY MASS SPECTROMETRY [LARGE SCALE ANALYSIS]</scope>
    <source>
        <tissue>Cervix carcinoma</tissue>
    </source>
</reference>
<reference key="9">
    <citation type="journal article" date="2008" name="Proc. Natl. Acad. Sci. U.S.A.">
        <title>A quantitative atlas of mitotic phosphorylation.</title>
        <authorList>
            <person name="Dephoure N."/>
            <person name="Zhou C."/>
            <person name="Villen J."/>
            <person name="Beausoleil S.A."/>
            <person name="Bakalarski C.E."/>
            <person name="Elledge S.J."/>
            <person name="Gygi S.P."/>
        </authorList>
    </citation>
    <scope>PHOSPHORYLATION [LARGE SCALE ANALYSIS] AT SER-80</scope>
    <scope>IDENTIFICATION BY MASS SPECTROMETRY [LARGE SCALE ANALYSIS]</scope>
    <source>
        <tissue>Cervix carcinoma</tissue>
    </source>
</reference>
<reference key="10">
    <citation type="journal article" date="2011" name="Sci. Signal.">
        <title>System-wide temporal characterization of the proteome and phosphoproteome of human embryonic stem cell differentiation.</title>
        <authorList>
            <person name="Rigbolt K.T."/>
            <person name="Prokhorova T.A."/>
            <person name="Akimov V."/>
            <person name="Henningsen J."/>
            <person name="Johansen P.T."/>
            <person name="Kratchmarova I."/>
            <person name="Kassem M."/>
            <person name="Mann M."/>
            <person name="Olsen J.V."/>
            <person name="Blagoev B."/>
        </authorList>
    </citation>
    <scope>PHOSPHORYLATION [LARGE SCALE ANALYSIS] AT SER-80</scope>
    <scope>IDENTIFICATION BY MASS SPECTROMETRY [LARGE SCALE ANALYSIS]</scope>
</reference>
<reference key="11">
    <citation type="journal article" date="2013" name="J. Proteome Res.">
        <title>Toward a comprehensive characterization of a human cancer cell phosphoproteome.</title>
        <authorList>
            <person name="Zhou H."/>
            <person name="Di Palma S."/>
            <person name="Preisinger C."/>
            <person name="Peng M."/>
            <person name="Polat A.N."/>
            <person name="Heck A.J."/>
            <person name="Mohammed S."/>
        </authorList>
    </citation>
    <scope>IDENTIFICATION BY MASS SPECTROMETRY [LARGE SCALE ANALYSIS]</scope>
    <source>
        <tissue>Erythroleukemia</tissue>
    </source>
</reference>
<reference key="12">
    <citation type="journal article" date="2017" name="Brain">
        <title>ZNHIT3 is defective in PEHO syndrome, a severe encephalopathy with cerebellar granule neuron loss.</title>
        <authorList>
            <person name="Anttonen A.K."/>
            <person name="Laari A."/>
            <person name="Kousi M."/>
            <person name="Yang Y.J."/>
            <person name="Jaeaeskelaeinen T."/>
            <person name="Somer M."/>
            <person name="Siintola E."/>
            <person name="Jakkula E."/>
            <person name="Muona M."/>
            <person name="Tegelberg S."/>
            <person name="Loennqvist T."/>
            <person name="Pihko H."/>
            <person name="Valanne L."/>
            <person name="Paetau A."/>
            <person name="Lun M.P."/>
            <person name="Haestbacka J."/>
            <person name="Kopra O."/>
            <person name="Joensuu T."/>
            <person name="Katsanis N."/>
            <person name="Lehtinen M.K."/>
            <person name="Palvimo J.J."/>
            <person name="Lehesjoki A.E."/>
        </authorList>
    </citation>
    <scope>SUBCELLULAR LOCATION</scope>
    <scope>INTERACTION WITH NUFIP1</scope>
    <scope>INVOLVEMENT IN PEHO</scope>
    <scope>VARIANT PEHO LEU-31</scope>
    <scope>CHARACTERIZATION OF VARIANT PEHO LEU-31</scope>
</reference>
<reference key="13">
    <citation type="journal article" date="2017" name="Nat. Commun.">
        <title>R2TP/Prefoldin-like component RUVBL1/RUVBL2 directly interacts with ZNHIT2 to regulate assembly of U5 small nuclear ribonucleoprotein.</title>
        <authorList>
            <person name="Cloutier P."/>
            <person name="Poitras C."/>
            <person name="Durand M."/>
            <person name="Hekmat O."/>
            <person name="Fiola-Masson E."/>
            <person name="Bouchard A."/>
            <person name="Faubert D."/>
            <person name="Chabot B."/>
            <person name="Coulombe B."/>
        </authorList>
    </citation>
    <scope>INTERACTION WITH RUVBL1/RUVBL2 COMPLEX</scope>
</reference>
<reference key="14">
    <citation type="submission" date="2007-10" db="PDB data bank">
        <title>Solution structure of the ZF-HIT domain in zinc finger HIT domain-containing protein 3 (TRIP-3).</title>
        <authorList>
            <consortium name="RIKEN structural genomics initiative (RSGI)"/>
        </authorList>
    </citation>
    <scope>STRUCTURE BY NMR OF 1-46</scope>
</reference>